<dbReference type="EMBL" id="AP006627">
    <property type="protein sequence ID" value="BAD65001.1"/>
    <property type="molecule type" value="Genomic_DNA"/>
</dbReference>
<dbReference type="RefSeq" id="WP_011247309.1">
    <property type="nucleotide sequence ID" value="NC_006582.1"/>
</dbReference>
<dbReference type="SMR" id="Q5WF59"/>
<dbReference type="STRING" id="66692.ABC2466"/>
<dbReference type="KEGG" id="bcl:ABC2466"/>
<dbReference type="eggNOG" id="COG0781">
    <property type="taxonomic scope" value="Bacteria"/>
</dbReference>
<dbReference type="HOGENOM" id="CLU_087843_3_3_9"/>
<dbReference type="OrthoDB" id="9811381at2"/>
<dbReference type="Proteomes" id="UP000001168">
    <property type="component" value="Chromosome"/>
</dbReference>
<dbReference type="GO" id="GO:0005829">
    <property type="term" value="C:cytosol"/>
    <property type="evidence" value="ECO:0007669"/>
    <property type="project" value="TreeGrafter"/>
</dbReference>
<dbReference type="GO" id="GO:0003723">
    <property type="term" value="F:RNA binding"/>
    <property type="evidence" value="ECO:0007669"/>
    <property type="project" value="UniProtKB-UniRule"/>
</dbReference>
<dbReference type="GO" id="GO:0006353">
    <property type="term" value="P:DNA-templated transcription termination"/>
    <property type="evidence" value="ECO:0007669"/>
    <property type="project" value="UniProtKB-UniRule"/>
</dbReference>
<dbReference type="GO" id="GO:0031564">
    <property type="term" value="P:transcription antitermination"/>
    <property type="evidence" value="ECO:0007669"/>
    <property type="project" value="UniProtKB-KW"/>
</dbReference>
<dbReference type="Gene3D" id="1.10.940.10">
    <property type="entry name" value="NusB-like"/>
    <property type="match status" value="1"/>
</dbReference>
<dbReference type="HAMAP" id="MF_00073">
    <property type="entry name" value="NusB"/>
    <property type="match status" value="1"/>
</dbReference>
<dbReference type="InterPro" id="IPR035926">
    <property type="entry name" value="NusB-like_sf"/>
</dbReference>
<dbReference type="InterPro" id="IPR011605">
    <property type="entry name" value="NusB_fam"/>
</dbReference>
<dbReference type="InterPro" id="IPR006027">
    <property type="entry name" value="NusB_RsmB_TIM44"/>
</dbReference>
<dbReference type="NCBIfam" id="TIGR01951">
    <property type="entry name" value="nusB"/>
    <property type="match status" value="1"/>
</dbReference>
<dbReference type="PANTHER" id="PTHR11078:SF3">
    <property type="entry name" value="ANTITERMINATION NUSB DOMAIN-CONTAINING PROTEIN"/>
    <property type="match status" value="1"/>
</dbReference>
<dbReference type="PANTHER" id="PTHR11078">
    <property type="entry name" value="N UTILIZATION SUBSTANCE PROTEIN B-RELATED"/>
    <property type="match status" value="1"/>
</dbReference>
<dbReference type="Pfam" id="PF01029">
    <property type="entry name" value="NusB"/>
    <property type="match status" value="1"/>
</dbReference>
<dbReference type="SUPFAM" id="SSF48013">
    <property type="entry name" value="NusB-like"/>
    <property type="match status" value="1"/>
</dbReference>
<reference key="1">
    <citation type="submission" date="2003-10" db="EMBL/GenBank/DDBJ databases">
        <title>The complete genome sequence of the alkaliphilic Bacillus clausii KSM-K16.</title>
        <authorList>
            <person name="Takaki Y."/>
            <person name="Kageyama Y."/>
            <person name="Shimamura S."/>
            <person name="Suzuki H."/>
            <person name="Nishi S."/>
            <person name="Hatada Y."/>
            <person name="Kawai S."/>
            <person name="Ito S."/>
            <person name="Horikoshi K."/>
        </authorList>
    </citation>
    <scope>NUCLEOTIDE SEQUENCE [LARGE SCALE GENOMIC DNA]</scope>
    <source>
        <strain>KSM-K16</strain>
    </source>
</reference>
<feature type="chain" id="PRO_0000265483" description="Transcription antitermination protein NusB">
    <location>
        <begin position="1"/>
        <end position="133"/>
    </location>
</feature>
<organism>
    <name type="scientific">Shouchella clausii (strain KSM-K16)</name>
    <name type="common">Alkalihalobacillus clausii</name>
    <dbReference type="NCBI Taxonomy" id="66692"/>
    <lineage>
        <taxon>Bacteria</taxon>
        <taxon>Bacillati</taxon>
        <taxon>Bacillota</taxon>
        <taxon>Bacilli</taxon>
        <taxon>Bacillales</taxon>
        <taxon>Bacillaceae</taxon>
        <taxon>Shouchella</taxon>
    </lineage>
</organism>
<evidence type="ECO:0000255" key="1">
    <source>
        <dbReference type="HAMAP-Rule" id="MF_00073"/>
    </source>
</evidence>
<keyword id="KW-1185">Reference proteome</keyword>
<keyword id="KW-0694">RNA-binding</keyword>
<keyword id="KW-0804">Transcription</keyword>
<keyword id="KW-0889">Transcription antitermination</keyword>
<keyword id="KW-0805">Transcription regulation</keyword>
<gene>
    <name evidence="1" type="primary">nusB</name>
    <name type="ordered locus">ABC2466</name>
</gene>
<protein>
    <recommendedName>
        <fullName evidence="1">Transcription antitermination protein NusB</fullName>
    </recommendedName>
    <alternativeName>
        <fullName evidence="1">Antitermination factor NusB</fullName>
    </alternativeName>
</protein>
<name>NUSB_SHOC1</name>
<comment type="function">
    <text evidence="1">Involved in transcription antitermination. Required for transcription of ribosomal RNA (rRNA) genes. Binds specifically to the boxA antiterminator sequence of the ribosomal RNA (rrn) operons.</text>
</comment>
<comment type="similarity">
    <text evidence="1">Belongs to the NusB family.</text>
</comment>
<accession>Q5WF59</accession>
<proteinExistence type="inferred from homology"/>
<sequence>MNRRVARLRAVQTLYQLTLIDINVDKAIENTLNDEEEPSEFYNTLVHGTLEHQDEIDGYLSENLKGYTLDRLGHVDRAIARMGLFEMLYLDDIPVNVTLNEAIELAKAFGGTDAGRFINGVLSNSYDMAMKNK</sequence>